<reference key="1">
    <citation type="journal article" date="2007" name="PLoS ONE">
        <title>Molecular correlates of host specialization in Staphylococcus aureus.</title>
        <authorList>
            <person name="Herron-Olson L."/>
            <person name="Fitzgerald J.R."/>
            <person name="Musser J.M."/>
            <person name="Kapur V."/>
        </authorList>
    </citation>
    <scope>NUCLEOTIDE SEQUENCE [LARGE SCALE GENOMIC DNA]</scope>
    <source>
        <strain>bovine RF122 / ET3-1</strain>
    </source>
</reference>
<feature type="chain" id="PRO_1000053648" description="Protein GrpE">
    <location>
        <begin position="1"/>
        <end position="208"/>
    </location>
</feature>
<feature type="region of interest" description="Disordered" evidence="2">
    <location>
        <begin position="1"/>
        <end position="49"/>
    </location>
</feature>
<feature type="compositionally biased region" description="Basic and acidic residues" evidence="2">
    <location>
        <begin position="1"/>
        <end position="12"/>
    </location>
</feature>
<feature type="compositionally biased region" description="Polar residues" evidence="2">
    <location>
        <begin position="13"/>
        <end position="23"/>
    </location>
</feature>
<sequence length="208" mass="24008">MTNKDESVEKNTESTVEVTNVKQNIDDSVEQTEESKGHLQDEAIEETSDENVIEEIDPKDQKINELQQLADENEEKYLRLYAEFENYKRRIQKENEINKTYQAQRVLTDILPAIDNIERALQIEGDDETFKSLQKGVQMVHESLINALKDNGLEVIKTEGEAFDPNIHQAVVQDDNPDFESGEITQELQKGYKLKDRVLRPSMVKVNQ</sequence>
<protein>
    <recommendedName>
        <fullName evidence="1">Protein GrpE</fullName>
    </recommendedName>
    <alternativeName>
        <fullName evidence="1">HSP-70 cofactor</fullName>
    </alternativeName>
</protein>
<accession>Q2YT46</accession>
<gene>
    <name evidence="1" type="primary">grpE</name>
    <name type="ordered locus">SAB1453c</name>
</gene>
<organism>
    <name type="scientific">Staphylococcus aureus (strain bovine RF122 / ET3-1)</name>
    <dbReference type="NCBI Taxonomy" id="273036"/>
    <lineage>
        <taxon>Bacteria</taxon>
        <taxon>Bacillati</taxon>
        <taxon>Bacillota</taxon>
        <taxon>Bacilli</taxon>
        <taxon>Bacillales</taxon>
        <taxon>Staphylococcaceae</taxon>
        <taxon>Staphylococcus</taxon>
    </lineage>
</organism>
<evidence type="ECO:0000255" key="1">
    <source>
        <dbReference type="HAMAP-Rule" id="MF_01151"/>
    </source>
</evidence>
<evidence type="ECO:0000256" key="2">
    <source>
        <dbReference type="SAM" id="MobiDB-lite"/>
    </source>
</evidence>
<dbReference type="EMBL" id="AJ938182">
    <property type="protein sequence ID" value="CAI81142.1"/>
    <property type="molecule type" value="Genomic_DNA"/>
</dbReference>
<dbReference type="RefSeq" id="WP_000182222.1">
    <property type="nucleotide sequence ID" value="NC_007622.1"/>
</dbReference>
<dbReference type="SMR" id="Q2YT46"/>
<dbReference type="KEGG" id="sab:SAB1453c"/>
<dbReference type="HOGENOM" id="CLU_057217_6_3_9"/>
<dbReference type="GO" id="GO:0005737">
    <property type="term" value="C:cytoplasm"/>
    <property type="evidence" value="ECO:0007669"/>
    <property type="project" value="UniProtKB-SubCell"/>
</dbReference>
<dbReference type="GO" id="GO:0000774">
    <property type="term" value="F:adenyl-nucleotide exchange factor activity"/>
    <property type="evidence" value="ECO:0007669"/>
    <property type="project" value="InterPro"/>
</dbReference>
<dbReference type="GO" id="GO:0042803">
    <property type="term" value="F:protein homodimerization activity"/>
    <property type="evidence" value="ECO:0007669"/>
    <property type="project" value="InterPro"/>
</dbReference>
<dbReference type="GO" id="GO:0051087">
    <property type="term" value="F:protein-folding chaperone binding"/>
    <property type="evidence" value="ECO:0007669"/>
    <property type="project" value="InterPro"/>
</dbReference>
<dbReference type="GO" id="GO:0051082">
    <property type="term" value="F:unfolded protein binding"/>
    <property type="evidence" value="ECO:0007669"/>
    <property type="project" value="TreeGrafter"/>
</dbReference>
<dbReference type="GO" id="GO:0006457">
    <property type="term" value="P:protein folding"/>
    <property type="evidence" value="ECO:0007669"/>
    <property type="project" value="InterPro"/>
</dbReference>
<dbReference type="CDD" id="cd00446">
    <property type="entry name" value="GrpE"/>
    <property type="match status" value="1"/>
</dbReference>
<dbReference type="FunFam" id="2.30.22.10:FF:000001">
    <property type="entry name" value="Protein GrpE"/>
    <property type="match status" value="1"/>
</dbReference>
<dbReference type="FunFam" id="3.90.20.20:FF:000002">
    <property type="entry name" value="Protein GrpE"/>
    <property type="match status" value="1"/>
</dbReference>
<dbReference type="Gene3D" id="3.90.20.20">
    <property type="match status" value="1"/>
</dbReference>
<dbReference type="Gene3D" id="2.30.22.10">
    <property type="entry name" value="Head domain of nucleotide exchange factor GrpE"/>
    <property type="match status" value="1"/>
</dbReference>
<dbReference type="HAMAP" id="MF_01151">
    <property type="entry name" value="GrpE"/>
    <property type="match status" value="1"/>
</dbReference>
<dbReference type="InterPro" id="IPR000740">
    <property type="entry name" value="GrpE"/>
</dbReference>
<dbReference type="InterPro" id="IPR013805">
    <property type="entry name" value="GrpE_coiled_coil"/>
</dbReference>
<dbReference type="InterPro" id="IPR009012">
    <property type="entry name" value="GrpE_head"/>
</dbReference>
<dbReference type="NCBIfam" id="NF010738">
    <property type="entry name" value="PRK14140.1"/>
    <property type="match status" value="1"/>
</dbReference>
<dbReference type="PANTHER" id="PTHR21237">
    <property type="entry name" value="GRPE PROTEIN"/>
    <property type="match status" value="1"/>
</dbReference>
<dbReference type="PANTHER" id="PTHR21237:SF23">
    <property type="entry name" value="GRPE PROTEIN HOMOLOG, MITOCHONDRIAL"/>
    <property type="match status" value="1"/>
</dbReference>
<dbReference type="Pfam" id="PF01025">
    <property type="entry name" value="GrpE"/>
    <property type="match status" value="1"/>
</dbReference>
<dbReference type="PRINTS" id="PR00773">
    <property type="entry name" value="GRPEPROTEIN"/>
</dbReference>
<dbReference type="SUPFAM" id="SSF58014">
    <property type="entry name" value="Coiled-coil domain of nucleotide exchange factor GrpE"/>
    <property type="match status" value="1"/>
</dbReference>
<dbReference type="SUPFAM" id="SSF51064">
    <property type="entry name" value="Head domain of nucleotide exchange factor GrpE"/>
    <property type="match status" value="1"/>
</dbReference>
<dbReference type="PROSITE" id="PS01071">
    <property type="entry name" value="GRPE"/>
    <property type="match status" value="1"/>
</dbReference>
<keyword id="KW-0143">Chaperone</keyword>
<keyword id="KW-0963">Cytoplasm</keyword>
<keyword id="KW-0346">Stress response</keyword>
<name>GRPE_STAAB</name>
<comment type="function">
    <text evidence="1">Participates actively in the response to hyperosmotic and heat shock by preventing the aggregation of stress-denatured proteins, in association with DnaK and GrpE. It is the nucleotide exchange factor for DnaK and may function as a thermosensor. Unfolded proteins bind initially to DnaJ; upon interaction with the DnaJ-bound protein, DnaK hydrolyzes its bound ATP, resulting in the formation of a stable complex. GrpE releases ADP from DnaK; ATP binding to DnaK triggers the release of the substrate protein, thus completing the reaction cycle. Several rounds of ATP-dependent interactions between DnaJ, DnaK and GrpE are required for fully efficient folding.</text>
</comment>
<comment type="subunit">
    <text evidence="1">Homodimer.</text>
</comment>
<comment type="subcellular location">
    <subcellularLocation>
        <location evidence="1">Cytoplasm</location>
    </subcellularLocation>
</comment>
<comment type="similarity">
    <text evidence="1">Belongs to the GrpE family.</text>
</comment>
<proteinExistence type="inferred from homology"/>